<protein>
    <recommendedName>
        <fullName evidence="1">Phosphopantetheine adenylyltransferase</fullName>
        <ecNumber evidence="1">2.7.7.3</ecNumber>
    </recommendedName>
    <alternativeName>
        <fullName evidence="1">Dephospho-CoA pyrophosphorylase</fullName>
    </alternativeName>
    <alternativeName>
        <fullName evidence="1">Pantetheine-phosphate adenylyltransferase</fullName>
        <shortName evidence="1">PPAT</shortName>
    </alternativeName>
</protein>
<reference key="1">
    <citation type="submission" date="2007-11" db="EMBL/GenBank/DDBJ databases">
        <authorList>
            <consortium name="The Salmonella enterica serovar Paratyphi B Genome Sequencing Project"/>
            <person name="McClelland M."/>
            <person name="Sanderson E.K."/>
            <person name="Porwollik S."/>
            <person name="Spieth J."/>
            <person name="Clifton W.S."/>
            <person name="Fulton R."/>
            <person name="Cordes M."/>
            <person name="Wollam A."/>
            <person name="Shah N."/>
            <person name="Pepin K."/>
            <person name="Bhonagiri V."/>
            <person name="Nash W."/>
            <person name="Johnson M."/>
            <person name="Thiruvilangam P."/>
            <person name="Wilson R."/>
        </authorList>
    </citation>
    <scope>NUCLEOTIDE SEQUENCE [LARGE SCALE GENOMIC DNA]</scope>
    <source>
        <strain>ATCC BAA-1250 / SPB7</strain>
    </source>
</reference>
<evidence type="ECO:0000255" key="1">
    <source>
        <dbReference type="HAMAP-Rule" id="MF_00151"/>
    </source>
</evidence>
<proteinExistence type="inferred from homology"/>
<dbReference type="EC" id="2.7.7.3" evidence="1"/>
<dbReference type="EMBL" id="CP000886">
    <property type="protein sequence ID" value="ABX69937.1"/>
    <property type="molecule type" value="Genomic_DNA"/>
</dbReference>
<dbReference type="RefSeq" id="WP_001171884.1">
    <property type="nucleotide sequence ID" value="NC_010102.1"/>
</dbReference>
<dbReference type="SMR" id="A9MVM9"/>
<dbReference type="KEGG" id="spq:SPAB_04624"/>
<dbReference type="PATRIC" id="fig|1016998.12.peg.4350"/>
<dbReference type="HOGENOM" id="CLU_100149_0_1_6"/>
<dbReference type="BioCyc" id="SENT1016998:SPAB_RS18820-MONOMER"/>
<dbReference type="UniPathway" id="UPA00241">
    <property type="reaction ID" value="UER00355"/>
</dbReference>
<dbReference type="Proteomes" id="UP000008556">
    <property type="component" value="Chromosome"/>
</dbReference>
<dbReference type="GO" id="GO:0005737">
    <property type="term" value="C:cytoplasm"/>
    <property type="evidence" value="ECO:0007669"/>
    <property type="project" value="UniProtKB-SubCell"/>
</dbReference>
<dbReference type="GO" id="GO:0005524">
    <property type="term" value="F:ATP binding"/>
    <property type="evidence" value="ECO:0007669"/>
    <property type="project" value="UniProtKB-KW"/>
</dbReference>
<dbReference type="GO" id="GO:0004595">
    <property type="term" value="F:pantetheine-phosphate adenylyltransferase activity"/>
    <property type="evidence" value="ECO:0007669"/>
    <property type="project" value="UniProtKB-UniRule"/>
</dbReference>
<dbReference type="GO" id="GO:0015937">
    <property type="term" value="P:coenzyme A biosynthetic process"/>
    <property type="evidence" value="ECO:0007669"/>
    <property type="project" value="UniProtKB-UniRule"/>
</dbReference>
<dbReference type="CDD" id="cd02163">
    <property type="entry name" value="PPAT"/>
    <property type="match status" value="1"/>
</dbReference>
<dbReference type="FunFam" id="3.40.50.620:FF:000012">
    <property type="entry name" value="Phosphopantetheine adenylyltransferase"/>
    <property type="match status" value="1"/>
</dbReference>
<dbReference type="Gene3D" id="3.40.50.620">
    <property type="entry name" value="HUPs"/>
    <property type="match status" value="1"/>
</dbReference>
<dbReference type="HAMAP" id="MF_00151">
    <property type="entry name" value="PPAT_bact"/>
    <property type="match status" value="1"/>
</dbReference>
<dbReference type="InterPro" id="IPR004821">
    <property type="entry name" value="Cyt_trans-like"/>
</dbReference>
<dbReference type="InterPro" id="IPR001980">
    <property type="entry name" value="PPAT"/>
</dbReference>
<dbReference type="InterPro" id="IPR014729">
    <property type="entry name" value="Rossmann-like_a/b/a_fold"/>
</dbReference>
<dbReference type="NCBIfam" id="TIGR01510">
    <property type="entry name" value="coaD_prev_kdtB"/>
    <property type="match status" value="1"/>
</dbReference>
<dbReference type="NCBIfam" id="TIGR00125">
    <property type="entry name" value="cyt_tran_rel"/>
    <property type="match status" value="1"/>
</dbReference>
<dbReference type="PANTHER" id="PTHR21342">
    <property type="entry name" value="PHOSPHOPANTETHEINE ADENYLYLTRANSFERASE"/>
    <property type="match status" value="1"/>
</dbReference>
<dbReference type="PANTHER" id="PTHR21342:SF1">
    <property type="entry name" value="PHOSPHOPANTETHEINE ADENYLYLTRANSFERASE"/>
    <property type="match status" value="1"/>
</dbReference>
<dbReference type="Pfam" id="PF01467">
    <property type="entry name" value="CTP_transf_like"/>
    <property type="match status" value="1"/>
</dbReference>
<dbReference type="PRINTS" id="PR01020">
    <property type="entry name" value="LPSBIOSNTHSS"/>
</dbReference>
<dbReference type="SUPFAM" id="SSF52374">
    <property type="entry name" value="Nucleotidylyl transferase"/>
    <property type="match status" value="1"/>
</dbReference>
<organism>
    <name type="scientific">Salmonella paratyphi B (strain ATCC BAA-1250 / SPB7)</name>
    <dbReference type="NCBI Taxonomy" id="1016998"/>
    <lineage>
        <taxon>Bacteria</taxon>
        <taxon>Pseudomonadati</taxon>
        <taxon>Pseudomonadota</taxon>
        <taxon>Gammaproteobacteria</taxon>
        <taxon>Enterobacterales</taxon>
        <taxon>Enterobacteriaceae</taxon>
        <taxon>Salmonella</taxon>
    </lineage>
</organism>
<name>COAD_SALPB</name>
<comment type="function">
    <text evidence="1">Reversibly transfers an adenylyl group from ATP to 4'-phosphopantetheine, yielding dephospho-CoA (dPCoA) and pyrophosphate.</text>
</comment>
<comment type="catalytic activity">
    <reaction evidence="1">
        <text>(R)-4'-phosphopantetheine + ATP + H(+) = 3'-dephospho-CoA + diphosphate</text>
        <dbReference type="Rhea" id="RHEA:19801"/>
        <dbReference type="ChEBI" id="CHEBI:15378"/>
        <dbReference type="ChEBI" id="CHEBI:30616"/>
        <dbReference type="ChEBI" id="CHEBI:33019"/>
        <dbReference type="ChEBI" id="CHEBI:57328"/>
        <dbReference type="ChEBI" id="CHEBI:61723"/>
        <dbReference type="EC" id="2.7.7.3"/>
    </reaction>
</comment>
<comment type="cofactor">
    <cofactor evidence="1">
        <name>Mg(2+)</name>
        <dbReference type="ChEBI" id="CHEBI:18420"/>
    </cofactor>
</comment>
<comment type="pathway">
    <text evidence="1">Cofactor biosynthesis; coenzyme A biosynthesis; CoA from (R)-pantothenate: step 4/5.</text>
</comment>
<comment type="subunit">
    <text evidence="1">Homohexamer.</text>
</comment>
<comment type="subcellular location">
    <subcellularLocation>
        <location evidence="1">Cytoplasm</location>
    </subcellularLocation>
</comment>
<comment type="similarity">
    <text evidence="1">Belongs to the bacterial CoaD family.</text>
</comment>
<accession>A9MVM9</accession>
<feature type="chain" id="PRO_1000076784" description="Phosphopantetheine adenylyltransferase">
    <location>
        <begin position="1"/>
        <end position="159"/>
    </location>
</feature>
<feature type="binding site" evidence="1">
    <location>
        <begin position="10"/>
        <end position="11"/>
    </location>
    <ligand>
        <name>ATP</name>
        <dbReference type="ChEBI" id="CHEBI:30616"/>
    </ligand>
</feature>
<feature type="binding site" evidence="1">
    <location>
        <position position="10"/>
    </location>
    <ligand>
        <name>substrate</name>
    </ligand>
</feature>
<feature type="binding site" evidence="1">
    <location>
        <position position="18"/>
    </location>
    <ligand>
        <name>ATP</name>
        <dbReference type="ChEBI" id="CHEBI:30616"/>
    </ligand>
</feature>
<feature type="binding site" evidence="1">
    <location>
        <position position="42"/>
    </location>
    <ligand>
        <name>substrate</name>
    </ligand>
</feature>
<feature type="binding site" evidence="1">
    <location>
        <position position="74"/>
    </location>
    <ligand>
        <name>substrate</name>
    </ligand>
</feature>
<feature type="binding site" evidence="1">
    <location>
        <position position="88"/>
    </location>
    <ligand>
        <name>substrate</name>
    </ligand>
</feature>
<feature type="binding site" evidence="1">
    <location>
        <begin position="89"/>
        <end position="91"/>
    </location>
    <ligand>
        <name>ATP</name>
        <dbReference type="ChEBI" id="CHEBI:30616"/>
    </ligand>
</feature>
<feature type="binding site" evidence="1">
    <location>
        <position position="99"/>
    </location>
    <ligand>
        <name>ATP</name>
        <dbReference type="ChEBI" id="CHEBI:30616"/>
    </ligand>
</feature>
<feature type="binding site" evidence="1">
    <location>
        <begin position="124"/>
        <end position="130"/>
    </location>
    <ligand>
        <name>ATP</name>
        <dbReference type="ChEBI" id="CHEBI:30616"/>
    </ligand>
</feature>
<feature type="site" description="Transition state stabilizer" evidence="1">
    <location>
        <position position="18"/>
    </location>
</feature>
<keyword id="KW-0067">ATP-binding</keyword>
<keyword id="KW-0173">Coenzyme A biosynthesis</keyword>
<keyword id="KW-0963">Cytoplasm</keyword>
<keyword id="KW-0460">Magnesium</keyword>
<keyword id="KW-0547">Nucleotide-binding</keyword>
<keyword id="KW-0548">Nucleotidyltransferase</keyword>
<keyword id="KW-0808">Transferase</keyword>
<gene>
    <name evidence="1" type="primary">coaD</name>
    <name type="ordered locus">SPAB_04624</name>
</gene>
<sequence>MQKRAIYPGTFDPITNGHLDIVTRATQMFDHVILAIAASPGKKPMFTLDERVALAQKATAHLGNVEVVGFSDLMANFARDRQANILIRGLRAVADFEYEMQLAHMNRHLMPQLESVFLMPSKEWSFISSSLVKEVARHQGDVTHFLPDNVHQALMDKLK</sequence>